<gene>
    <name type="ordered locus">SUN_0226</name>
</gene>
<evidence type="ECO:0000255" key="1">
    <source>
        <dbReference type="HAMAP-Rule" id="MF_00632"/>
    </source>
</evidence>
<dbReference type="EMBL" id="AP009179">
    <property type="protein sequence ID" value="BAF71186.1"/>
    <property type="molecule type" value="Genomic_DNA"/>
</dbReference>
<dbReference type="RefSeq" id="WP_011979919.1">
    <property type="nucleotide sequence ID" value="NC_009663.1"/>
</dbReference>
<dbReference type="SMR" id="A6Q6S7"/>
<dbReference type="STRING" id="387093.SUN_0226"/>
<dbReference type="KEGG" id="sun:SUN_0226"/>
<dbReference type="eggNOG" id="COG1666">
    <property type="taxonomic scope" value="Bacteria"/>
</dbReference>
<dbReference type="HOGENOM" id="CLU_099839_1_0_7"/>
<dbReference type="OrthoDB" id="9801447at2"/>
<dbReference type="Proteomes" id="UP000006378">
    <property type="component" value="Chromosome"/>
</dbReference>
<dbReference type="GO" id="GO:0005829">
    <property type="term" value="C:cytosol"/>
    <property type="evidence" value="ECO:0007669"/>
    <property type="project" value="TreeGrafter"/>
</dbReference>
<dbReference type="GO" id="GO:0000166">
    <property type="term" value="F:nucleotide binding"/>
    <property type="evidence" value="ECO:0007669"/>
    <property type="project" value="TreeGrafter"/>
</dbReference>
<dbReference type="CDD" id="cd11740">
    <property type="entry name" value="YajQ_like"/>
    <property type="match status" value="1"/>
</dbReference>
<dbReference type="Gene3D" id="3.30.70.860">
    <property type="match status" value="1"/>
</dbReference>
<dbReference type="Gene3D" id="3.30.70.990">
    <property type="entry name" value="YajQ-like, domain 2"/>
    <property type="match status" value="1"/>
</dbReference>
<dbReference type="HAMAP" id="MF_00632">
    <property type="entry name" value="YajQ"/>
    <property type="match status" value="1"/>
</dbReference>
<dbReference type="InterPro" id="IPR007551">
    <property type="entry name" value="DUF520"/>
</dbReference>
<dbReference type="InterPro" id="IPR035571">
    <property type="entry name" value="UPF0234-like_C"/>
</dbReference>
<dbReference type="InterPro" id="IPR035570">
    <property type="entry name" value="UPF0234_N"/>
</dbReference>
<dbReference type="InterPro" id="IPR036183">
    <property type="entry name" value="YajQ-like_sf"/>
</dbReference>
<dbReference type="NCBIfam" id="NF003819">
    <property type="entry name" value="PRK05412.1"/>
    <property type="match status" value="1"/>
</dbReference>
<dbReference type="PANTHER" id="PTHR30476">
    <property type="entry name" value="UPF0234 PROTEIN YAJQ"/>
    <property type="match status" value="1"/>
</dbReference>
<dbReference type="PANTHER" id="PTHR30476:SF0">
    <property type="entry name" value="UPF0234 PROTEIN YAJQ"/>
    <property type="match status" value="1"/>
</dbReference>
<dbReference type="Pfam" id="PF04461">
    <property type="entry name" value="DUF520"/>
    <property type="match status" value="1"/>
</dbReference>
<dbReference type="SUPFAM" id="SSF89963">
    <property type="entry name" value="YajQ-like"/>
    <property type="match status" value="2"/>
</dbReference>
<proteinExistence type="inferred from homology"/>
<keyword id="KW-0547">Nucleotide-binding</keyword>
<protein>
    <recommendedName>
        <fullName evidence="1">Nucleotide-binding protein SUN_0226</fullName>
    </recommendedName>
</protein>
<comment type="function">
    <text evidence="1">Nucleotide-binding protein.</text>
</comment>
<comment type="similarity">
    <text evidence="1">Belongs to the YajQ family.</text>
</comment>
<sequence length="166" mass="18496">MAKDHYFDISAKLDMMEMKNAIEQAKKEVSTRFDFKGIMVEIDLNEKAKVLNLSSSSDSKIDALKDIVMSKMIKRGLSTKSLDEVKTEGISGGNVKVVYRIVDSIEKDEAKKIVKAIKDAKLKVTPSIQGDEIRVTGKKIDDLQAVIALVKQMEDLKAPLTFGNFK</sequence>
<feature type="chain" id="PRO_1000147326" description="Nucleotide-binding protein SUN_0226">
    <location>
        <begin position="1"/>
        <end position="166"/>
    </location>
</feature>
<name>Y226_SULNB</name>
<organism>
    <name type="scientific">Sulfurovum sp. (strain NBC37-1)</name>
    <dbReference type="NCBI Taxonomy" id="387093"/>
    <lineage>
        <taxon>Bacteria</taxon>
        <taxon>Pseudomonadati</taxon>
        <taxon>Campylobacterota</taxon>
        <taxon>Epsilonproteobacteria</taxon>
        <taxon>Campylobacterales</taxon>
        <taxon>Sulfurovaceae</taxon>
        <taxon>Sulfurovum</taxon>
    </lineage>
</organism>
<reference key="1">
    <citation type="journal article" date="2007" name="Proc. Natl. Acad. Sci. U.S.A.">
        <title>Deep-sea vent epsilon-proteobacterial genomes provide insights into emergence of pathogens.</title>
        <authorList>
            <person name="Nakagawa S."/>
            <person name="Takaki Y."/>
            <person name="Shimamura S."/>
            <person name="Reysenbach A.-L."/>
            <person name="Takai K."/>
            <person name="Horikoshi K."/>
        </authorList>
    </citation>
    <scope>NUCLEOTIDE SEQUENCE [LARGE SCALE GENOMIC DNA]</scope>
    <source>
        <strain>NBC37-1</strain>
    </source>
</reference>
<accession>A6Q6S7</accession>